<comment type="subcellular location">
    <subcellularLocation>
        <location evidence="1">Secreted</location>
    </subcellularLocation>
</comment>
<comment type="tissue specificity">
    <text>Expressed by the venom duct.</text>
</comment>
<comment type="domain">
    <text>The cysteine framework is XI (C-C-CC-CC-C-C).</text>
</comment>
<comment type="similarity">
    <text evidence="4">Belongs to the conotoxin I2 superfamily.</text>
</comment>
<organism>
    <name type="scientific">Conus imperialis</name>
    <name type="common">Imperial cone</name>
    <dbReference type="NCBI Taxonomy" id="35631"/>
    <lineage>
        <taxon>Eukaryota</taxon>
        <taxon>Metazoa</taxon>
        <taxon>Spiralia</taxon>
        <taxon>Lophotrochozoa</taxon>
        <taxon>Mollusca</taxon>
        <taxon>Gastropoda</taxon>
        <taxon>Caenogastropoda</taxon>
        <taxon>Neogastropoda</taxon>
        <taxon>Conoidea</taxon>
        <taxon>Conidae</taxon>
        <taxon>Conus</taxon>
        <taxon>Stephanoconus</taxon>
    </lineage>
</organism>
<protein>
    <recommendedName>
        <fullName>Conotoxin Im11.1</fullName>
    </recommendedName>
</protein>
<feature type="signal peptide" evidence="3">
    <location>
        <begin position="1"/>
        <end position="26"/>
    </location>
</feature>
<feature type="chain" id="PRO_0000035094" description="Conotoxin Im11.1">
    <location>
        <begin position="27"/>
        <end position="57"/>
    </location>
</feature>
<feature type="propeptide" id="PRO_0000035095" evidence="1">
    <location>
        <begin position="61"/>
        <end position="64"/>
    </location>
</feature>
<feature type="modified residue" description="Asparagine amide" evidence="1">
    <location>
        <position position="57"/>
    </location>
</feature>
<feature type="disulfide bond" evidence="2">
    <location>
        <begin position="27"/>
        <end position="41"/>
    </location>
</feature>
<feature type="disulfide bond" evidence="2">
    <location>
        <begin position="34"/>
        <end position="46"/>
    </location>
</feature>
<feature type="disulfide bond" evidence="2">
    <location>
        <begin position="40"/>
        <end position="50"/>
    </location>
</feature>
<feature type="disulfide bond" evidence="2">
    <location>
        <begin position="45"/>
        <end position="54"/>
    </location>
</feature>
<reference key="1">
    <citation type="journal article" date="2004" name="Toxicon">
        <title>Novel conopeptides of the I-superfamily occur in several clades of cone snails.</title>
        <authorList>
            <person name="Kauferstein S."/>
            <person name="Huys I."/>
            <person name="Kuch U."/>
            <person name="Melaun C."/>
            <person name="Tytgat J."/>
            <person name="Mebs D."/>
        </authorList>
    </citation>
    <scope>NUCLEOTIDE SEQUENCE [MRNA]</scope>
    <source>
        <tissue>Venom duct</tissue>
    </source>
</reference>
<evidence type="ECO:0000250" key="1"/>
<evidence type="ECO:0000250" key="2">
    <source>
        <dbReference type="UniProtKB" id="Q7Z094"/>
    </source>
</evidence>
<evidence type="ECO:0000255" key="3"/>
<evidence type="ECO:0000305" key="4"/>
<sequence length="64" mass="7163">MMFRLTSVSCFLLVIACLNLVVLTNACLRDGQSCGYDSDCCRYSCCWGYCDLTCLINGKRATFQ</sequence>
<proteinExistence type="evidence at transcript level"/>
<keyword id="KW-0027">Amidation</keyword>
<keyword id="KW-0165">Cleavage on pair of basic residues</keyword>
<keyword id="KW-1015">Disulfide bond</keyword>
<keyword id="KW-0964">Secreted</keyword>
<keyword id="KW-0732">Signal</keyword>
<keyword id="KW-0800">Toxin</keyword>
<accession>P69497</accession>
<accession>Q59AA9</accession>
<name>I23_CONIM</name>
<dbReference type="EMBL" id="AJ746184">
    <property type="protein sequence ID" value="CAG34092.1"/>
    <property type="molecule type" value="mRNA"/>
</dbReference>
<dbReference type="SMR" id="P69497"/>
<dbReference type="ConoServer" id="1395">
    <property type="toxin name" value="Im11.1 precursor"/>
</dbReference>
<dbReference type="GO" id="GO:0005576">
    <property type="term" value="C:extracellular region"/>
    <property type="evidence" value="ECO:0007669"/>
    <property type="project" value="UniProtKB-SubCell"/>
</dbReference>
<dbReference type="GO" id="GO:0090729">
    <property type="term" value="F:toxin activity"/>
    <property type="evidence" value="ECO:0007669"/>
    <property type="project" value="UniProtKB-KW"/>
</dbReference>
<dbReference type="InterPro" id="IPR013141">
    <property type="entry name" value="Conotoxin-I_CS"/>
</dbReference>
<dbReference type="InterPro" id="IPR020242">
    <property type="entry name" value="Conotoxin_I2"/>
</dbReference>
<dbReference type="Pfam" id="PF17557">
    <property type="entry name" value="Conotoxin_I2"/>
    <property type="match status" value="1"/>
</dbReference>
<dbReference type="PROSITE" id="PS60019">
    <property type="entry name" value="I_CONOTOXIN"/>
    <property type="match status" value="1"/>
</dbReference>